<accession>P82657</accession>
<organism>
    <name type="scientific">Spinacia oleracea</name>
    <name type="common">Spinach</name>
    <dbReference type="NCBI Taxonomy" id="3562"/>
    <lineage>
        <taxon>Eukaryota</taxon>
        <taxon>Viridiplantae</taxon>
        <taxon>Streptophyta</taxon>
        <taxon>Embryophyta</taxon>
        <taxon>Tracheophyta</taxon>
        <taxon>Spermatophyta</taxon>
        <taxon>Magnoliopsida</taxon>
        <taxon>eudicotyledons</taxon>
        <taxon>Gunneridae</taxon>
        <taxon>Pentapetalae</taxon>
        <taxon>Caryophyllales</taxon>
        <taxon>Chenopodiaceae</taxon>
        <taxon>Chenopodioideae</taxon>
        <taxon>Anserineae</taxon>
        <taxon>Spinacia</taxon>
    </lineage>
</organism>
<dbReference type="Proteomes" id="UP001155700">
    <property type="component" value="Unplaced"/>
</dbReference>
<dbReference type="GO" id="GO:0009543">
    <property type="term" value="C:chloroplast thylakoid lumen"/>
    <property type="evidence" value="ECO:0007669"/>
    <property type="project" value="UniProtKB-SubCell"/>
</dbReference>
<protein>
    <recommendedName>
        <fullName>Thylakoid lumenal 11 kDa protein</fullName>
    </recommendedName>
    <alternativeName>
        <fullName>P11</fullName>
    </alternativeName>
</protein>
<reference key="1">
    <citation type="submission" date="2000-07" db="UniProtKB">
        <authorList>
            <person name="Kieselbach T."/>
            <person name="Pettersson U."/>
            <person name="Bystedt M."/>
            <person name="Schroeder W.P."/>
        </authorList>
    </citation>
    <scope>PROTEIN SEQUENCE</scope>
</reference>
<comment type="subcellular location">
    <subcellularLocation>
        <location>Plastid</location>
        <location>Chloroplast thylakoid lumen</location>
    </subcellularLocation>
</comment>
<comment type="similarity">
    <text evidence="2">To A.thaliana At2g44920.</text>
</comment>
<feature type="chain" id="PRO_0000217678" description="Thylakoid lumenal 11 kDa protein">
    <location>
        <begin position="1"/>
        <end position="22" status="greater than"/>
    </location>
</feature>
<feature type="region of interest" description="Disordered" evidence="1">
    <location>
        <begin position="1"/>
        <end position="22"/>
    </location>
</feature>
<feature type="non-terminal residue">
    <location>
        <position position="22"/>
    </location>
</feature>
<evidence type="ECO:0000256" key="1">
    <source>
        <dbReference type="SAM" id="MobiDB-lite"/>
    </source>
</evidence>
<evidence type="ECO:0000305" key="2"/>
<name>TL11_SPIOL</name>
<proteinExistence type="evidence at protein level"/>
<keyword id="KW-0150">Chloroplast</keyword>
<keyword id="KW-0903">Direct protein sequencing</keyword>
<keyword id="KW-0934">Plastid</keyword>
<keyword id="KW-1185">Reference proteome</keyword>
<keyword id="KW-0793">Thylakoid</keyword>
<sequence>FKGGGPYGQGVTRGQDLSGKDF</sequence>